<name>Y3260_BRUA1</name>
<gene>
    <name type="ordered locus">BAbS19_II03260</name>
</gene>
<reference key="1">
    <citation type="journal article" date="2008" name="PLoS ONE">
        <title>Genome sequence of Brucella abortus vaccine strain S19 compared to virulent strains yields candidate virulence genes.</title>
        <authorList>
            <person name="Crasta O.R."/>
            <person name="Folkerts O."/>
            <person name="Fei Z."/>
            <person name="Mane S.P."/>
            <person name="Evans C."/>
            <person name="Martino-Catt S."/>
            <person name="Bricker B."/>
            <person name="Yu G."/>
            <person name="Du L."/>
            <person name="Sobral B.W."/>
        </authorList>
    </citation>
    <scope>NUCLEOTIDE SEQUENCE [LARGE SCALE GENOMIC DNA]</scope>
    <source>
        <strain>S19</strain>
    </source>
</reference>
<sequence length="64" mass="7126">MDDKVETGNIDVRLLELLVCPLTKGPLEYDAERSELVSRKARLAYPVRGGIPIMLPSEARSLTE</sequence>
<accession>B2SAE8</accession>
<evidence type="ECO:0000255" key="1">
    <source>
        <dbReference type="HAMAP-Rule" id="MF_01187"/>
    </source>
</evidence>
<comment type="similarity">
    <text evidence="1">Belongs to the UPF0434 family.</text>
</comment>
<proteinExistence type="inferred from homology"/>
<feature type="chain" id="PRO_1000138290" description="UPF0434 protein BAbS19_II03260">
    <location>
        <begin position="1"/>
        <end position="64"/>
    </location>
</feature>
<dbReference type="EMBL" id="CP000888">
    <property type="protein sequence ID" value="ACD73835.1"/>
    <property type="molecule type" value="Genomic_DNA"/>
</dbReference>
<dbReference type="RefSeq" id="WP_002965755.1">
    <property type="nucleotide sequence ID" value="NC_010740.1"/>
</dbReference>
<dbReference type="SMR" id="B2SAE8"/>
<dbReference type="KEGG" id="bmc:BAbS19_II03260"/>
<dbReference type="HOGENOM" id="CLU_155659_2_2_5"/>
<dbReference type="Proteomes" id="UP000002565">
    <property type="component" value="Chromosome 2"/>
</dbReference>
<dbReference type="GO" id="GO:0005829">
    <property type="term" value="C:cytosol"/>
    <property type="evidence" value="ECO:0007669"/>
    <property type="project" value="TreeGrafter"/>
</dbReference>
<dbReference type="FunFam" id="2.20.25.10:FF:000002">
    <property type="entry name" value="UPF0434 protein YcaR"/>
    <property type="match status" value="1"/>
</dbReference>
<dbReference type="Gene3D" id="2.20.25.10">
    <property type="match status" value="1"/>
</dbReference>
<dbReference type="HAMAP" id="MF_01187">
    <property type="entry name" value="UPF0434"/>
    <property type="match status" value="1"/>
</dbReference>
<dbReference type="InterPro" id="IPR005651">
    <property type="entry name" value="Trm112-like"/>
</dbReference>
<dbReference type="PANTHER" id="PTHR33505:SF4">
    <property type="entry name" value="PROTEIN PREY, MITOCHONDRIAL"/>
    <property type="match status" value="1"/>
</dbReference>
<dbReference type="PANTHER" id="PTHR33505">
    <property type="entry name" value="ZGC:162634"/>
    <property type="match status" value="1"/>
</dbReference>
<dbReference type="Pfam" id="PF03966">
    <property type="entry name" value="Trm112p"/>
    <property type="match status" value="1"/>
</dbReference>
<dbReference type="SUPFAM" id="SSF158997">
    <property type="entry name" value="Trm112p-like"/>
    <property type="match status" value="1"/>
</dbReference>
<protein>
    <recommendedName>
        <fullName evidence="1">UPF0434 protein BAbS19_II03260</fullName>
    </recommendedName>
</protein>
<organism>
    <name type="scientific">Brucella abortus (strain S19)</name>
    <dbReference type="NCBI Taxonomy" id="430066"/>
    <lineage>
        <taxon>Bacteria</taxon>
        <taxon>Pseudomonadati</taxon>
        <taxon>Pseudomonadota</taxon>
        <taxon>Alphaproteobacteria</taxon>
        <taxon>Hyphomicrobiales</taxon>
        <taxon>Brucellaceae</taxon>
        <taxon>Brucella/Ochrobactrum group</taxon>
        <taxon>Brucella</taxon>
    </lineage>
</organism>